<feature type="chain" id="PRO_1000212944" description="Cobalt-precorrin-5B C(1)-methyltransferase">
    <location>
        <begin position="1"/>
        <end position="349"/>
    </location>
</feature>
<comment type="function">
    <text evidence="1">Catalyzes the methylation of C-1 in cobalt-precorrin-5B to form cobalt-precorrin-6A.</text>
</comment>
<comment type="catalytic activity">
    <reaction evidence="1">
        <text>Co-precorrin-5B + S-adenosyl-L-methionine = Co-precorrin-6A + S-adenosyl-L-homocysteine</text>
        <dbReference type="Rhea" id="RHEA:26285"/>
        <dbReference type="ChEBI" id="CHEBI:57856"/>
        <dbReference type="ChEBI" id="CHEBI:59789"/>
        <dbReference type="ChEBI" id="CHEBI:60063"/>
        <dbReference type="ChEBI" id="CHEBI:60064"/>
        <dbReference type="EC" id="2.1.1.195"/>
    </reaction>
</comment>
<comment type="pathway">
    <text evidence="1">Cofactor biosynthesis; adenosylcobalamin biosynthesis; cob(II)yrinate a,c-diamide from sirohydrochlorin (anaerobic route): step 6/10.</text>
</comment>
<comment type="similarity">
    <text evidence="1">Belongs to the CbiD family.</text>
</comment>
<proteinExistence type="inferred from homology"/>
<sequence>MIINSLKRFGITTGAAASAAAKAAVMGLLNREKRNTVVIPTPIGLRLEIPVEKVEIDSGIACAEVKKFSGDNPDILDGLVIRCCAKLNESNEIVIVGEKGVGKVTRSGLKATMGETAISPTVRDMVINAIREVTDKGIQITIEVPNGDIIAENTLNKMVGIVGGISILGTTGIETPVSDDDYLEHIKCELNVIRQSYDFVVIAPGNSAAKYASKLFDSNSIIKVGDRIGDSIKLASSVFRKVILAGLPAKLLKVYAGIFNTHYSQGDARLESLTHASVLAGLPYDVLTKITNALSVEEAFTYMTKEQRRKVMKIVAEKILSRIKSFNGDINFCVIIFDYDGESLSRVGC</sequence>
<reference key="1">
    <citation type="journal article" date="2009" name="Proc. Natl. Acad. Sci. U.S.A.">
        <title>Biogeography of the Sulfolobus islandicus pan-genome.</title>
        <authorList>
            <person name="Reno M.L."/>
            <person name="Held N.L."/>
            <person name="Fields C.J."/>
            <person name="Burke P.V."/>
            <person name="Whitaker R.J."/>
        </authorList>
    </citation>
    <scope>NUCLEOTIDE SEQUENCE [LARGE SCALE GENOMIC DNA]</scope>
    <source>
        <strain>Y.N.15.51 / Yellowstone #2</strain>
    </source>
</reference>
<name>CBID_SACI1</name>
<keyword id="KW-0169">Cobalamin biosynthesis</keyword>
<keyword id="KW-0489">Methyltransferase</keyword>
<keyword id="KW-0949">S-adenosyl-L-methionine</keyword>
<keyword id="KW-0808">Transferase</keyword>
<dbReference type="EC" id="2.1.1.195" evidence="1"/>
<dbReference type="EMBL" id="CP001404">
    <property type="protein sequence ID" value="ACP47308.1"/>
    <property type="molecule type" value="Genomic_DNA"/>
</dbReference>
<dbReference type="RefSeq" id="WP_012716955.1">
    <property type="nucleotide sequence ID" value="NC_012623.1"/>
</dbReference>
<dbReference type="SMR" id="C3NJQ6"/>
<dbReference type="GeneID" id="7811485"/>
<dbReference type="KEGG" id="sin:YN1551_0111"/>
<dbReference type="HOGENOM" id="CLU_041273_1_0_2"/>
<dbReference type="UniPathway" id="UPA00148">
    <property type="reaction ID" value="UER00227"/>
</dbReference>
<dbReference type="Proteomes" id="UP000006818">
    <property type="component" value="Chromosome"/>
</dbReference>
<dbReference type="GO" id="GO:0043780">
    <property type="term" value="F:cobalt-precorrin-5B C1-methyltransferase activity"/>
    <property type="evidence" value="ECO:0007669"/>
    <property type="project" value="RHEA"/>
</dbReference>
<dbReference type="GO" id="GO:0019251">
    <property type="term" value="P:anaerobic cobalamin biosynthetic process"/>
    <property type="evidence" value="ECO:0007669"/>
    <property type="project" value="UniProtKB-UniRule"/>
</dbReference>
<dbReference type="GO" id="GO:0032259">
    <property type="term" value="P:methylation"/>
    <property type="evidence" value="ECO:0007669"/>
    <property type="project" value="UniProtKB-KW"/>
</dbReference>
<dbReference type="Gene3D" id="3.30.2110.10">
    <property type="entry name" value="CbiD-like"/>
    <property type="match status" value="1"/>
</dbReference>
<dbReference type="Gene3D" id="3.40.50.10720">
    <property type="entry name" value="CbiD-like domains"/>
    <property type="match status" value="1"/>
</dbReference>
<dbReference type="HAMAP" id="MF_00787">
    <property type="entry name" value="CbiD"/>
    <property type="match status" value="1"/>
</dbReference>
<dbReference type="InterPro" id="IPR002748">
    <property type="entry name" value="CbiD"/>
</dbReference>
<dbReference type="InterPro" id="IPR036074">
    <property type="entry name" value="CbiD_sf"/>
</dbReference>
<dbReference type="NCBIfam" id="TIGR00312">
    <property type="entry name" value="cbiD"/>
    <property type="match status" value="1"/>
</dbReference>
<dbReference type="PANTHER" id="PTHR35863">
    <property type="entry name" value="COBALT-PRECORRIN-5B C(1)-METHYLTRANSFERASE"/>
    <property type="match status" value="1"/>
</dbReference>
<dbReference type="PANTHER" id="PTHR35863:SF1">
    <property type="entry name" value="COBALT-PRECORRIN-5B C(1)-METHYLTRANSFERASE"/>
    <property type="match status" value="1"/>
</dbReference>
<dbReference type="Pfam" id="PF01888">
    <property type="entry name" value="CbiD"/>
    <property type="match status" value="1"/>
</dbReference>
<dbReference type="PIRSF" id="PIRSF026782">
    <property type="entry name" value="CbiD"/>
    <property type="match status" value="1"/>
</dbReference>
<dbReference type="SUPFAM" id="SSF111342">
    <property type="entry name" value="CbiD-like"/>
    <property type="match status" value="1"/>
</dbReference>
<evidence type="ECO:0000255" key="1">
    <source>
        <dbReference type="HAMAP-Rule" id="MF_00787"/>
    </source>
</evidence>
<protein>
    <recommendedName>
        <fullName evidence="1">Cobalt-precorrin-5B C(1)-methyltransferase</fullName>
        <ecNumber evidence="1">2.1.1.195</ecNumber>
    </recommendedName>
    <alternativeName>
        <fullName evidence="1">Cobalt-precorrin-6A synthase</fullName>
    </alternativeName>
</protein>
<gene>
    <name evidence="1" type="primary">cbiD</name>
    <name type="ordered locus">YN1551_0111</name>
</gene>
<accession>C3NJQ6</accession>
<organism>
    <name type="scientific">Saccharolobus islandicus (strain Y.N.15.51 / Yellowstone #2)</name>
    <name type="common">Sulfolobus islandicus</name>
    <dbReference type="NCBI Taxonomy" id="419942"/>
    <lineage>
        <taxon>Archaea</taxon>
        <taxon>Thermoproteota</taxon>
        <taxon>Thermoprotei</taxon>
        <taxon>Sulfolobales</taxon>
        <taxon>Sulfolobaceae</taxon>
        <taxon>Saccharolobus</taxon>
    </lineage>
</organism>